<proteinExistence type="inferred from homology"/>
<sequence length="390" mass="41372">MAFDLAARLAERRAADLYRQRPLLQSPQGPQVVVDGQPLLAFCSNDYLGLANHPDVIQAWRAGAERWGVGGGASHLVIGHSTPHHQVEEALAELTGRPRALLFSTGYMANLGAITALVGQGDTVLQDRLNHASLLDGGLLSGARFSRYLHNDPASLASRLEKATGNTLVVTDGVFSMDGDCANLPALADVARARGAWLMVDDAHGLGTLGANGGGLLEQFGLGVDDVPVLIGTLGKACGTSGAFVVGSEELIEALVQFARPYIYTTSQPPALACATLKALELLRKDTWRREHLAALIRQFREGARQIGLTLMDSHTAIQPILIGDAGRAMALSRKLRERGLLVTAIRPPTVPVGSARLRVTLSAAHSEAQVQLLLNALAECYPQLESADA</sequence>
<evidence type="ECO:0000255" key="1">
    <source>
        <dbReference type="HAMAP-Rule" id="MF_01693"/>
    </source>
</evidence>
<name>BIOF_PSEE4</name>
<accession>Q1I3N7</accession>
<keyword id="KW-0093">Biotin biosynthesis</keyword>
<keyword id="KW-0663">Pyridoxal phosphate</keyword>
<keyword id="KW-0808">Transferase</keyword>
<organism>
    <name type="scientific">Pseudomonas entomophila (strain L48)</name>
    <dbReference type="NCBI Taxonomy" id="384676"/>
    <lineage>
        <taxon>Bacteria</taxon>
        <taxon>Pseudomonadati</taxon>
        <taxon>Pseudomonadota</taxon>
        <taxon>Gammaproteobacteria</taxon>
        <taxon>Pseudomonadales</taxon>
        <taxon>Pseudomonadaceae</taxon>
        <taxon>Pseudomonas</taxon>
    </lineage>
</organism>
<reference key="1">
    <citation type="journal article" date="2006" name="Nat. Biotechnol.">
        <title>Complete genome sequence of the entomopathogenic and metabolically versatile soil bacterium Pseudomonas entomophila.</title>
        <authorList>
            <person name="Vodovar N."/>
            <person name="Vallenet D."/>
            <person name="Cruveiller S."/>
            <person name="Rouy Z."/>
            <person name="Barbe V."/>
            <person name="Acosta C."/>
            <person name="Cattolico L."/>
            <person name="Jubin C."/>
            <person name="Lajus A."/>
            <person name="Segurens B."/>
            <person name="Vacherie B."/>
            <person name="Wincker P."/>
            <person name="Weissenbach J."/>
            <person name="Lemaitre B."/>
            <person name="Medigue C."/>
            <person name="Boccard F."/>
        </authorList>
    </citation>
    <scope>NUCLEOTIDE SEQUENCE [LARGE SCALE GENOMIC DNA]</scope>
    <source>
        <strain>L48</strain>
    </source>
</reference>
<gene>
    <name evidence="1" type="primary">bioF</name>
    <name type="ordered locus">PSEEN5120</name>
</gene>
<feature type="chain" id="PRO_0000381075" description="8-amino-7-oxononanoate synthase">
    <location>
        <begin position="1"/>
        <end position="390"/>
    </location>
</feature>
<feature type="binding site" evidence="1">
    <location>
        <position position="19"/>
    </location>
    <ligand>
        <name>substrate</name>
    </ligand>
</feature>
<feature type="binding site" evidence="1">
    <location>
        <begin position="106"/>
        <end position="107"/>
    </location>
    <ligand>
        <name>pyridoxal 5'-phosphate</name>
        <dbReference type="ChEBI" id="CHEBI:597326"/>
    </ligand>
</feature>
<feature type="binding site" evidence="1">
    <location>
        <position position="131"/>
    </location>
    <ligand>
        <name>substrate</name>
    </ligand>
</feature>
<feature type="binding site" evidence="1">
    <location>
        <position position="176"/>
    </location>
    <ligand>
        <name>pyridoxal 5'-phosphate</name>
        <dbReference type="ChEBI" id="CHEBI:597326"/>
    </ligand>
</feature>
<feature type="binding site" evidence="1">
    <location>
        <position position="204"/>
    </location>
    <ligand>
        <name>pyridoxal 5'-phosphate</name>
        <dbReference type="ChEBI" id="CHEBI:597326"/>
    </ligand>
</feature>
<feature type="binding site" evidence="1">
    <location>
        <position position="233"/>
    </location>
    <ligand>
        <name>pyridoxal 5'-phosphate</name>
        <dbReference type="ChEBI" id="CHEBI:597326"/>
    </ligand>
</feature>
<feature type="binding site" evidence="1">
    <location>
        <position position="350"/>
    </location>
    <ligand>
        <name>substrate</name>
    </ligand>
</feature>
<feature type="modified residue" description="N6-(pyridoxal phosphate)lysine" evidence="1">
    <location>
        <position position="236"/>
    </location>
</feature>
<protein>
    <recommendedName>
        <fullName evidence="1">8-amino-7-oxononanoate synthase</fullName>
        <shortName evidence="1">AONS</shortName>
        <ecNumber evidence="1">2.3.1.47</ecNumber>
    </recommendedName>
    <alternativeName>
        <fullName evidence="1">7-keto-8-amino-pelargonic acid synthase</fullName>
        <shortName evidence="1">7-KAP synthase</shortName>
        <shortName evidence="1">KAPA synthase</shortName>
    </alternativeName>
    <alternativeName>
        <fullName evidence="1">8-amino-7-ketopelargonate synthase</fullName>
    </alternativeName>
</protein>
<comment type="function">
    <text evidence="1">Catalyzes the decarboxylative condensation of pimeloyl-[acyl-carrier protein] and L-alanine to produce 8-amino-7-oxononanoate (AON), [acyl-carrier protein], and carbon dioxide.</text>
</comment>
<comment type="catalytic activity">
    <reaction evidence="1">
        <text>6-carboxyhexanoyl-[ACP] + L-alanine + H(+) = (8S)-8-amino-7-oxononanoate + holo-[ACP] + CO2</text>
        <dbReference type="Rhea" id="RHEA:42288"/>
        <dbReference type="Rhea" id="RHEA-COMP:9685"/>
        <dbReference type="Rhea" id="RHEA-COMP:9955"/>
        <dbReference type="ChEBI" id="CHEBI:15378"/>
        <dbReference type="ChEBI" id="CHEBI:16526"/>
        <dbReference type="ChEBI" id="CHEBI:57972"/>
        <dbReference type="ChEBI" id="CHEBI:64479"/>
        <dbReference type="ChEBI" id="CHEBI:78846"/>
        <dbReference type="ChEBI" id="CHEBI:149468"/>
        <dbReference type="EC" id="2.3.1.47"/>
    </reaction>
</comment>
<comment type="cofactor">
    <cofactor evidence="1">
        <name>pyridoxal 5'-phosphate</name>
        <dbReference type="ChEBI" id="CHEBI:597326"/>
    </cofactor>
</comment>
<comment type="pathway">
    <text evidence="1">Cofactor biosynthesis; biotin biosynthesis.</text>
</comment>
<comment type="subunit">
    <text evidence="1">Homodimer.</text>
</comment>
<comment type="similarity">
    <text evidence="1">Belongs to the class-II pyridoxal-phosphate-dependent aminotransferase family. BioF subfamily.</text>
</comment>
<dbReference type="EC" id="2.3.1.47" evidence="1"/>
<dbReference type="EMBL" id="CT573326">
    <property type="protein sequence ID" value="CAK17749.1"/>
    <property type="molecule type" value="Genomic_DNA"/>
</dbReference>
<dbReference type="RefSeq" id="WP_011536108.1">
    <property type="nucleotide sequence ID" value="NC_008027.1"/>
</dbReference>
<dbReference type="SMR" id="Q1I3N7"/>
<dbReference type="STRING" id="384676.PSEEN5120"/>
<dbReference type="GeneID" id="32808053"/>
<dbReference type="KEGG" id="pen:PSEEN5120"/>
<dbReference type="eggNOG" id="COG0156">
    <property type="taxonomic scope" value="Bacteria"/>
</dbReference>
<dbReference type="HOGENOM" id="CLU_015846_11_0_6"/>
<dbReference type="OrthoDB" id="9807157at2"/>
<dbReference type="UniPathway" id="UPA00078"/>
<dbReference type="Proteomes" id="UP000000658">
    <property type="component" value="Chromosome"/>
</dbReference>
<dbReference type="GO" id="GO:0008710">
    <property type="term" value="F:8-amino-7-oxononanoate synthase activity"/>
    <property type="evidence" value="ECO:0007669"/>
    <property type="project" value="UniProtKB-UniRule"/>
</dbReference>
<dbReference type="GO" id="GO:0030170">
    <property type="term" value="F:pyridoxal phosphate binding"/>
    <property type="evidence" value="ECO:0007669"/>
    <property type="project" value="UniProtKB-UniRule"/>
</dbReference>
<dbReference type="GO" id="GO:0009102">
    <property type="term" value="P:biotin biosynthetic process"/>
    <property type="evidence" value="ECO:0007669"/>
    <property type="project" value="UniProtKB-UniRule"/>
</dbReference>
<dbReference type="CDD" id="cd06454">
    <property type="entry name" value="KBL_like"/>
    <property type="match status" value="1"/>
</dbReference>
<dbReference type="Gene3D" id="3.90.1150.10">
    <property type="entry name" value="Aspartate Aminotransferase, domain 1"/>
    <property type="match status" value="1"/>
</dbReference>
<dbReference type="Gene3D" id="3.40.640.10">
    <property type="entry name" value="Type I PLP-dependent aspartate aminotransferase-like (Major domain)"/>
    <property type="match status" value="1"/>
</dbReference>
<dbReference type="HAMAP" id="MF_01693">
    <property type="entry name" value="BioF_aminotrans_2"/>
    <property type="match status" value="1"/>
</dbReference>
<dbReference type="InterPro" id="IPR004839">
    <property type="entry name" value="Aminotransferase_I/II_large"/>
</dbReference>
<dbReference type="InterPro" id="IPR050087">
    <property type="entry name" value="AON_synthase_class-II"/>
</dbReference>
<dbReference type="InterPro" id="IPR004723">
    <property type="entry name" value="AONS_Archaea/Proteobacteria"/>
</dbReference>
<dbReference type="InterPro" id="IPR022834">
    <property type="entry name" value="AONS_Proteobacteria"/>
</dbReference>
<dbReference type="InterPro" id="IPR015424">
    <property type="entry name" value="PyrdxlP-dep_Trfase"/>
</dbReference>
<dbReference type="InterPro" id="IPR015421">
    <property type="entry name" value="PyrdxlP-dep_Trfase_major"/>
</dbReference>
<dbReference type="InterPro" id="IPR015422">
    <property type="entry name" value="PyrdxlP-dep_Trfase_small"/>
</dbReference>
<dbReference type="NCBIfam" id="TIGR00858">
    <property type="entry name" value="bioF"/>
    <property type="match status" value="1"/>
</dbReference>
<dbReference type="PANTHER" id="PTHR13693:SF100">
    <property type="entry name" value="8-AMINO-7-OXONONANOATE SYNTHASE"/>
    <property type="match status" value="1"/>
</dbReference>
<dbReference type="PANTHER" id="PTHR13693">
    <property type="entry name" value="CLASS II AMINOTRANSFERASE/8-AMINO-7-OXONONANOATE SYNTHASE"/>
    <property type="match status" value="1"/>
</dbReference>
<dbReference type="Pfam" id="PF00155">
    <property type="entry name" value="Aminotran_1_2"/>
    <property type="match status" value="1"/>
</dbReference>
<dbReference type="SUPFAM" id="SSF53383">
    <property type="entry name" value="PLP-dependent transferases"/>
    <property type="match status" value="1"/>
</dbReference>